<keyword id="KW-0002">3D-structure</keyword>
<keyword id="KW-0009">Actin-binding</keyword>
<keyword id="KW-0020">Allergen</keyword>
<keyword id="KW-0963">Cytoplasm</keyword>
<keyword id="KW-0206">Cytoskeleton</keyword>
<keyword id="KW-1185">Reference proteome</keyword>
<proteinExistence type="evidence at protein level"/>
<sequence>MSWQVYVDEHLMCEIEGNHLTSAAIIGQDGSVWAQSQNFPQLKPEEVAGIVGDFADPGTLAPTGLYIGGTKYMVIQGEPGAVIRGKKGPGGATVKKTGMALVIGIYDEPMTPGQCNMIVERLGDYLIDQGL</sequence>
<dbReference type="EMBL" id="AY879597">
    <property type="protein sequence ID" value="AAW69549.1"/>
    <property type="molecule type" value="mRNA"/>
</dbReference>
<dbReference type="EMBL" id="AY879598">
    <property type="protein sequence ID" value="AAW69550.1"/>
    <property type="molecule type" value="mRNA"/>
</dbReference>
<dbReference type="RefSeq" id="NP_001284474.1">
    <property type="nucleotide sequence ID" value="NM_001297545.1"/>
</dbReference>
<dbReference type="PDB" id="6MBX">
    <property type="method" value="X-ray"/>
    <property type="resolution" value="2.40 A"/>
    <property type="chains" value="A/B/C=2-131"/>
</dbReference>
<dbReference type="PDBsum" id="6MBX"/>
<dbReference type="SMR" id="Q5FX67"/>
<dbReference type="FunCoup" id="Q5FX67">
    <property type="interactions" value="403"/>
</dbReference>
<dbReference type="Allergome" id="3230">
    <property type="allergen name" value="Cuc m 2.0101"/>
</dbReference>
<dbReference type="Allergome" id="981">
    <property type="allergen name" value="Cuc m 2"/>
</dbReference>
<dbReference type="GeneID" id="103498238"/>
<dbReference type="KEGG" id="cmo:103498238"/>
<dbReference type="eggNOG" id="KOG1755">
    <property type="taxonomic scope" value="Eukaryota"/>
</dbReference>
<dbReference type="InParanoid" id="Q5FX67"/>
<dbReference type="Proteomes" id="UP000089565">
    <property type="component" value="Unplaced"/>
</dbReference>
<dbReference type="Proteomes" id="UP000596662">
    <property type="component" value="Unplaced"/>
</dbReference>
<dbReference type="GO" id="GO:0005938">
    <property type="term" value="C:cell cortex"/>
    <property type="evidence" value="ECO:0007669"/>
    <property type="project" value="TreeGrafter"/>
</dbReference>
<dbReference type="GO" id="GO:0005856">
    <property type="term" value="C:cytoskeleton"/>
    <property type="evidence" value="ECO:0007669"/>
    <property type="project" value="UniProtKB-SubCell"/>
</dbReference>
<dbReference type="GO" id="GO:0003785">
    <property type="term" value="F:actin monomer binding"/>
    <property type="evidence" value="ECO:0007669"/>
    <property type="project" value="TreeGrafter"/>
</dbReference>
<dbReference type="CDD" id="cd00148">
    <property type="entry name" value="PROF"/>
    <property type="match status" value="1"/>
</dbReference>
<dbReference type="FunFam" id="3.30.450.30:FF:000001">
    <property type="entry name" value="Profilin"/>
    <property type="match status" value="1"/>
</dbReference>
<dbReference type="Gene3D" id="3.30.450.30">
    <property type="entry name" value="Dynein light chain 2a, cytoplasmic"/>
    <property type="match status" value="1"/>
</dbReference>
<dbReference type="InterPro" id="IPR048278">
    <property type="entry name" value="PFN"/>
</dbReference>
<dbReference type="InterPro" id="IPR005455">
    <property type="entry name" value="PFN_euk"/>
</dbReference>
<dbReference type="InterPro" id="IPR036140">
    <property type="entry name" value="PFN_sf"/>
</dbReference>
<dbReference type="InterPro" id="IPR027310">
    <property type="entry name" value="Profilin_CS"/>
</dbReference>
<dbReference type="PANTHER" id="PTHR11604">
    <property type="entry name" value="PROFILIN"/>
    <property type="match status" value="1"/>
</dbReference>
<dbReference type="PANTHER" id="PTHR11604:SF46">
    <property type="entry name" value="PROFILIN-1"/>
    <property type="match status" value="1"/>
</dbReference>
<dbReference type="Pfam" id="PF00235">
    <property type="entry name" value="Profilin"/>
    <property type="match status" value="1"/>
</dbReference>
<dbReference type="PRINTS" id="PR00392">
    <property type="entry name" value="PROFILIN"/>
</dbReference>
<dbReference type="PRINTS" id="PR01640">
    <property type="entry name" value="PROFILINPLNT"/>
</dbReference>
<dbReference type="SMART" id="SM00392">
    <property type="entry name" value="PROF"/>
    <property type="match status" value="1"/>
</dbReference>
<dbReference type="SUPFAM" id="SSF55770">
    <property type="entry name" value="Profilin (actin-binding protein)"/>
    <property type="match status" value="1"/>
</dbReference>
<dbReference type="PROSITE" id="PS00414">
    <property type="entry name" value="PROFILIN"/>
    <property type="match status" value="1"/>
</dbReference>
<protein>
    <recommendedName>
        <fullName>Profilin</fullName>
    </recommendedName>
    <alternativeName>
        <fullName>Pollen allergen Cuc m 2</fullName>
    </alternativeName>
    <allergenName>Cuc m 2</allergenName>
</protein>
<accession>Q5FX67</accession>
<accession>Q5FX66</accession>
<name>PROF_CUCME</name>
<evidence type="ECO:0000250" key="1"/>
<evidence type="ECO:0000269" key="2">
    <source>
    </source>
</evidence>
<evidence type="ECO:0000269" key="3">
    <source>
    </source>
</evidence>
<evidence type="ECO:0000305" key="4"/>
<evidence type="ECO:0007829" key="5">
    <source>
        <dbReference type="PDB" id="6MBX"/>
    </source>
</evidence>
<comment type="function">
    <text evidence="1">Binds to actin and affects the structure of the cytoskeleton. At high concentrations, profilin prevents the polymerization of actin, whereas it enhances it at low concentrations. By binding to PIP2, it inhibits the formation of IP3 and DG (By similarity).</text>
</comment>
<comment type="subunit">
    <text>Occurs in many kinds of cells as a complex with monomeric actin in a 1:1 ratio.</text>
</comment>
<comment type="subcellular location">
    <subcellularLocation>
        <location evidence="1">Cytoplasm</location>
        <location evidence="1">Cytoskeleton</location>
    </subcellularLocation>
</comment>
<comment type="allergen">
    <text evidence="2 3">Causes an allergic reaction in human. Binds to IgE. This is a pollen allergen.</text>
</comment>
<comment type="similarity">
    <text evidence="4">Belongs to the profilin family.</text>
</comment>
<organism>
    <name type="scientific">Cucumis melo</name>
    <name type="common">Muskmelon</name>
    <dbReference type="NCBI Taxonomy" id="3656"/>
    <lineage>
        <taxon>Eukaryota</taxon>
        <taxon>Viridiplantae</taxon>
        <taxon>Streptophyta</taxon>
        <taxon>Embryophyta</taxon>
        <taxon>Tracheophyta</taxon>
        <taxon>Spermatophyta</taxon>
        <taxon>Magnoliopsida</taxon>
        <taxon>eudicotyledons</taxon>
        <taxon>Gunneridae</taxon>
        <taxon>Pentapetalae</taxon>
        <taxon>rosids</taxon>
        <taxon>fabids</taxon>
        <taxon>Cucurbitales</taxon>
        <taxon>Cucurbitaceae</taxon>
        <taxon>Benincaseae</taxon>
        <taxon>Cucumis</taxon>
    </lineage>
</organism>
<feature type="initiator methionine" description="Removed" evidence="1">
    <location>
        <position position="1"/>
    </location>
</feature>
<feature type="chain" id="PRO_0000199628" description="Profilin">
    <location>
        <begin position="2"/>
        <end position="131"/>
    </location>
</feature>
<feature type="helix" evidence="5">
    <location>
        <begin position="3"/>
        <end position="8"/>
    </location>
</feature>
<feature type="turn" evidence="5">
    <location>
        <begin position="9"/>
        <end position="11"/>
    </location>
</feature>
<feature type="strand" evidence="5">
    <location>
        <begin position="21"/>
        <end position="27"/>
    </location>
</feature>
<feature type="strand" evidence="5">
    <location>
        <begin position="32"/>
        <end position="35"/>
    </location>
</feature>
<feature type="helix" evidence="5">
    <location>
        <begin position="44"/>
        <end position="55"/>
    </location>
</feature>
<feature type="turn" evidence="5">
    <location>
        <begin position="57"/>
        <end position="63"/>
    </location>
</feature>
<feature type="strand" evidence="5">
    <location>
        <begin position="65"/>
        <end position="67"/>
    </location>
</feature>
<feature type="strand" evidence="5">
    <location>
        <begin position="70"/>
        <end position="74"/>
    </location>
</feature>
<feature type="turn" evidence="5">
    <location>
        <begin position="79"/>
        <end position="81"/>
    </location>
</feature>
<feature type="strand" evidence="5">
    <location>
        <begin position="82"/>
        <end position="87"/>
    </location>
</feature>
<feature type="strand" evidence="5">
    <location>
        <begin position="90"/>
        <end position="96"/>
    </location>
</feature>
<feature type="strand" evidence="5">
    <location>
        <begin position="98"/>
        <end position="106"/>
    </location>
</feature>
<feature type="helix" evidence="5">
    <location>
        <begin position="112"/>
        <end position="128"/>
    </location>
</feature>
<reference key="1">
    <citation type="journal article" date="2005" name="Clin. Mol. Allergy">
        <title>Sequence homology: a poor predictive value for profilins cross-reactivity.</title>
        <authorList>
            <person name="Sankian M."/>
            <person name="Varasteh A."/>
            <person name="Pazouki N."/>
            <person name="Mahmoudi M."/>
        </authorList>
    </citation>
    <scope>NUCLEOTIDE SEQUENCE [MRNA]</scope>
    <scope>ALLERGEN</scope>
</reference>
<reference key="2">
    <citation type="journal article" date="2019" name="Mol. Immunol.">
        <title>Comparative structural and thermal stability studies of Cuc m 2.0101, Art v 4.0101 and other allergenic profilins.</title>
        <authorList>
            <person name="Kapingidza A.B."/>
            <person name="Pye S.E."/>
            <person name="Hyduke N."/>
            <person name="Dolamore C."/>
            <person name="Pote S."/>
            <person name="Schlachter C.R."/>
            <person name="Commins S.P."/>
            <person name="Kowal K."/>
            <person name="Chruszcz M."/>
        </authorList>
    </citation>
    <scope>X-RAY CRYSTALLOGRAPHY (2.40 ANGSTROMS) OF 2-131</scope>
    <scope>ALLERGEN</scope>
</reference>